<sequence length="347" mass="40072">MIKLFSLFIYLYLISNLKLINTINNTPVIGILTQPFPSSINIKYGDNYLMASYVKYVESAGARVVPIFYNQDDESLTTIFKQINGILLPGGDVDFKTEIQYVKTLTLIWDYVLDVNINGDYFPLWGTCLGLEEIVSLQAESFDVLTDFNAENYSIPLNFSNIALESKIMKNCPTNIINSLANDPITMNNHHFGISPNTFDNNSLLNQFFNVLATNNDKSGNEFISLIESKDYPIYAIIWHPEKSPYSWYSKDATDHSFNAILACQYMSNFFVNETRKSNHKFNDEEVLFKSLIYNYNPTYTFKETHVEQIYIFNTSTNNTKNDFNINQIFSKKLFIIIFILIILFFK</sequence>
<gene>
    <name type="primary">gghB</name>
    <name type="ORF">DDB_G0289365</name>
</gene>
<protein>
    <recommendedName>
        <fullName>Gamma-glutamyl hydrolase B</fullName>
        <ecNumber>3.4.19.9</ecNumber>
    </recommendedName>
    <alternativeName>
        <fullName>Conjugase B</fullName>
    </alternativeName>
    <alternativeName>
        <fullName>GH B</fullName>
    </alternativeName>
    <alternativeName>
        <fullName>Gamma-Glu-X carboxypeptidase B</fullName>
    </alternativeName>
</protein>
<proteinExistence type="inferred from homology"/>
<dbReference type="EC" id="3.4.19.9"/>
<dbReference type="EMBL" id="AAFI02000139">
    <property type="protein sequence ID" value="EAL62769.1"/>
    <property type="molecule type" value="Genomic_DNA"/>
</dbReference>
<dbReference type="RefSeq" id="XP_636287.1">
    <property type="nucleotide sequence ID" value="XM_631195.1"/>
</dbReference>
<dbReference type="SMR" id="Q54HL4"/>
<dbReference type="FunCoup" id="Q54HL4">
    <property type="interactions" value="99"/>
</dbReference>
<dbReference type="STRING" id="44689.Q54HL4"/>
<dbReference type="MEROPS" id="C26.001"/>
<dbReference type="GlyCosmos" id="Q54HL4">
    <property type="glycosylation" value="6 sites, No reported glycans"/>
</dbReference>
<dbReference type="GlyGen" id="Q54HL4">
    <property type="glycosylation" value="6 sites"/>
</dbReference>
<dbReference type="PaxDb" id="44689-DDB0266397"/>
<dbReference type="EnsemblProtists" id="EAL62769">
    <property type="protein sequence ID" value="EAL62769"/>
    <property type="gene ID" value="DDB_G0289365"/>
</dbReference>
<dbReference type="GeneID" id="8627105"/>
<dbReference type="KEGG" id="ddi:DDB_G0289365"/>
<dbReference type="dictyBase" id="DDB_G0289365">
    <property type="gene designation" value="gghB"/>
</dbReference>
<dbReference type="VEuPathDB" id="AmoebaDB:DDB_G0289365"/>
<dbReference type="eggNOG" id="KOG1559">
    <property type="taxonomic scope" value="Eukaryota"/>
</dbReference>
<dbReference type="HOGENOM" id="CLU_058704_1_1_1"/>
<dbReference type="InParanoid" id="Q54HL4"/>
<dbReference type="OMA" id="KFQANDD"/>
<dbReference type="PhylomeDB" id="Q54HL4"/>
<dbReference type="Reactome" id="R-DDI-6798695">
    <property type="pathway name" value="Neutrophil degranulation"/>
</dbReference>
<dbReference type="PRO" id="PR:Q54HL4"/>
<dbReference type="Proteomes" id="UP000002195">
    <property type="component" value="Chromosome 5"/>
</dbReference>
<dbReference type="GO" id="GO:0005615">
    <property type="term" value="C:extracellular space"/>
    <property type="evidence" value="ECO:0000250"/>
    <property type="project" value="UniProtKB"/>
</dbReference>
<dbReference type="GO" id="GO:0005773">
    <property type="term" value="C:vacuole"/>
    <property type="evidence" value="ECO:0000318"/>
    <property type="project" value="GO_Central"/>
</dbReference>
<dbReference type="GO" id="GO:0034722">
    <property type="term" value="F:gamma-glutamyl-peptidase activity"/>
    <property type="evidence" value="ECO:0000318"/>
    <property type="project" value="GO_Central"/>
</dbReference>
<dbReference type="GO" id="GO:0008242">
    <property type="term" value="F:omega peptidase activity"/>
    <property type="evidence" value="ECO:0000250"/>
    <property type="project" value="UniProtKB"/>
</dbReference>
<dbReference type="GO" id="GO:0046900">
    <property type="term" value="P:tetrahydrofolylpolyglutamate metabolic process"/>
    <property type="evidence" value="ECO:0000318"/>
    <property type="project" value="GO_Central"/>
</dbReference>
<dbReference type="CDD" id="cd01747">
    <property type="entry name" value="GATase1_Glutamyl_Hydrolase"/>
    <property type="match status" value="1"/>
</dbReference>
<dbReference type="FunFam" id="3.40.50.880:FF:000024">
    <property type="entry name" value="Folate gamma-glutamyl hydrolase"/>
    <property type="match status" value="1"/>
</dbReference>
<dbReference type="Gene3D" id="3.40.50.880">
    <property type="match status" value="1"/>
</dbReference>
<dbReference type="InterPro" id="IPR029062">
    <property type="entry name" value="Class_I_gatase-like"/>
</dbReference>
<dbReference type="InterPro" id="IPR015527">
    <property type="entry name" value="Pept_C26_g-glut_hydrolase"/>
</dbReference>
<dbReference type="InterPro" id="IPR011697">
    <property type="entry name" value="Peptidase_C26"/>
</dbReference>
<dbReference type="PANTHER" id="PTHR11315:SF0">
    <property type="entry name" value="FOLATE GAMMA-GLUTAMYL HYDROLASE"/>
    <property type="match status" value="1"/>
</dbReference>
<dbReference type="PANTHER" id="PTHR11315">
    <property type="entry name" value="PROTEASE FAMILY C26 GAMMA-GLUTAMYL HYDROLASE"/>
    <property type="match status" value="1"/>
</dbReference>
<dbReference type="Pfam" id="PF07722">
    <property type="entry name" value="Peptidase_C26"/>
    <property type="match status" value="1"/>
</dbReference>
<dbReference type="SUPFAM" id="SSF52317">
    <property type="entry name" value="Class I glutamine amidotransferase-like"/>
    <property type="match status" value="1"/>
</dbReference>
<dbReference type="PROSITE" id="PS51275">
    <property type="entry name" value="PEPTIDASE_C26_GGH"/>
    <property type="match status" value="1"/>
</dbReference>
<feature type="signal peptide" evidence="2">
    <location>
        <begin position="1"/>
        <end position="22"/>
    </location>
</feature>
<feature type="chain" id="PRO_0000327992" description="Gamma-glutamyl hydrolase B">
    <location>
        <begin position="23"/>
        <end position="347"/>
    </location>
</feature>
<feature type="domain" description="Gamma-glutamyl hydrolase" evidence="3">
    <location>
        <begin position="23"/>
        <end position="314"/>
    </location>
</feature>
<feature type="active site" description="Nucleophile" evidence="3">
    <location>
        <position position="128"/>
    </location>
</feature>
<feature type="active site" description="Proton donor" evidence="3">
    <location>
        <position position="240"/>
    </location>
</feature>
<feature type="glycosylation site" description="N-linked (GlcNAc...) asparagine" evidence="2">
    <location>
        <position position="152"/>
    </location>
</feature>
<feature type="glycosylation site" description="N-linked (GlcNAc...) asparagine" evidence="2">
    <location>
        <position position="158"/>
    </location>
</feature>
<feature type="glycosylation site" description="N-linked (GlcNAc...) asparagine" evidence="2">
    <location>
        <position position="201"/>
    </location>
</feature>
<feature type="glycosylation site" description="N-linked (GlcNAc...) asparagine" evidence="2">
    <location>
        <position position="273"/>
    </location>
</feature>
<feature type="glycosylation site" description="N-linked (GlcNAc...) asparagine" evidence="2">
    <location>
        <position position="314"/>
    </location>
</feature>
<feature type="glycosylation site" description="N-linked (GlcNAc...) asparagine" evidence="2">
    <location>
        <position position="318"/>
    </location>
</feature>
<accession>Q54HL4</accession>
<reference key="1">
    <citation type="journal article" date="2005" name="Nature">
        <title>The genome of the social amoeba Dictyostelium discoideum.</title>
        <authorList>
            <person name="Eichinger L."/>
            <person name="Pachebat J.A."/>
            <person name="Gloeckner G."/>
            <person name="Rajandream M.A."/>
            <person name="Sucgang R."/>
            <person name="Berriman M."/>
            <person name="Song J."/>
            <person name="Olsen R."/>
            <person name="Szafranski K."/>
            <person name="Xu Q."/>
            <person name="Tunggal B."/>
            <person name="Kummerfeld S."/>
            <person name="Madera M."/>
            <person name="Konfortov B.A."/>
            <person name="Rivero F."/>
            <person name="Bankier A.T."/>
            <person name="Lehmann R."/>
            <person name="Hamlin N."/>
            <person name="Davies R."/>
            <person name="Gaudet P."/>
            <person name="Fey P."/>
            <person name="Pilcher K."/>
            <person name="Chen G."/>
            <person name="Saunders D."/>
            <person name="Sodergren E.J."/>
            <person name="Davis P."/>
            <person name="Kerhornou A."/>
            <person name="Nie X."/>
            <person name="Hall N."/>
            <person name="Anjard C."/>
            <person name="Hemphill L."/>
            <person name="Bason N."/>
            <person name="Farbrother P."/>
            <person name="Desany B."/>
            <person name="Just E."/>
            <person name="Morio T."/>
            <person name="Rost R."/>
            <person name="Churcher C.M."/>
            <person name="Cooper J."/>
            <person name="Haydock S."/>
            <person name="van Driessche N."/>
            <person name="Cronin A."/>
            <person name="Goodhead I."/>
            <person name="Muzny D.M."/>
            <person name="Mourier T."/>
            <person name="Pain A."/>
            <person name="Lu M."/>
            <person name="Harper D."/>
            <person name="Lindsay R."/>
            <person name="Hauser H."/>
            <person name="James K.D."/>
            <person name="Quiles M."/>
            <person name="Madan Babu M."/>
            <person name="Saito T."/>
            <person name="Buchrieser C."/>
            <person name="Wardroper A."/>
            <person name="Felder M."/>
            <person name="Thangavelu M."/>
            <person name="Johnson D."/>
            <person name="Knights A."/>
            <person name="Loulseged H."/>
            <person name="Mungall K.L."/>
            <person name="Oliver K."/>
            <person name="Price C."/>
            <person name="Quail M.A."/>
            <person name="Urushihara H."/>
            <person name="Hernandez J."/>
            <person name="Rabbinowitsch E."/>
            <person name="Steffen D."/>
            <person name="Sanders M."/>
            <person name="Ma J."/>
            <person name="Kohara Y."/>
            <person name="Sharp S."/>
            <person name="Simmonds M.N."/>
            <person name="Spiegler S."/>
            <person name="Tivey A."/>
            <person name="Sugano S."/>
            <person name="White B."/>
            <person name="Walker D."/>
            <person name="Woodward J.R."/>
            <person name="Winckler T."/>
            <person name="Tanaka Y."/>
            <person name="Shaulsky G."/>
            <person name="Schleicher M."/>
            <person name="Weinstock G.M."/>
            <person name="Rosenthal A."/>
            <person name="Cox E.C."/>
            <person name="Chisholm R.L."/>
            <person name="Gibbs R.A."/>
            <person name="Loomis W.F."/>
            <person name="Platzer M."/>
            <person name="Kay R.R."/>
            <person name="Williams J.G."/>
            <person name="Dear P.H."/>
            <person name="Noegel A.A."/>
            <person name="Barrell B.G."/>
            <person name="Kuspa A."/>
        </authorList>
    </citation>
    <scope>NUCLEOTIDE SEQUENCE [LARGE SCALE GENOMIC DNA]</scope>
    <source>
        <strain>AX4</strain>
    </source>
</reference>
<keyword id="KW-0325">Glycoprotein</keyword>
<keyword id="KW-0378">Hydrolase</keyword>
<keyword id="KW-1185">Reference proteome</keyword>
<keyword id="KW-0964">Secreted</keyword>
<keyword id="KW-0732">Signal</keyword>
<comment type="catalytic activity">
    <reaction>
        <text>(6S)-5,6,7,8-tetrahydrofolyl-(gamma-L-Glu)(n) + (n-1) H2O = (6S)-5,6,7,8-tetrahydrofolate + (n-1) L-glutamate</text>
        <dbReference type="Rhea" id="RHEA:56784"/>
        <dbReference type="Rhea" id="RHEA-COMP:14738"/>
        <dbReference type="ChEBI" id="CHEBI:15377"/>
        <dbReference type="ChEBI" id="CHEBI:29985"/>
        <dbReference type="ChEBI" id="CHEBI:57453"/>
        <dbReference type="ChEBI" id="CHEBI:141005"/>
        <dbReference type="EC" id="3.4.19.9"/>
    </reaction>
</comment>
<comment type="subcellular location">
    <subcellularLocation>
        <location evidence="1">Secreted</location>
        <location evidence="1">Extracellular space</location>
    </subcellularLocation>
</comment>
<comment type="similarity">
    <text evidence="4">Belongs to the peptidase C26 family.</text>
</comment>
<organism>
    <name type="scientific">Dictyostelium discoideum</name>
    <name type="common">Social amoeba</name>
    <dbReference type="NCBI Taxonomy" id="44689"/>
    <lineage>
        <taxon>Eukaryota</taxon>
        <taxon>Amoebozoa</taxon>
        <taxon>Evosea</taxon>
        <taxon>Eumycetozoa</taxon>
        <taxon>Dictyostelia</taxon>
        <taxon>Dictyosteliales</taxon>
        <taxon>Dictyosteliaceae</taxon>
        <taxon>Dictyostelium</taxon>
    </lineage>
</organism>
<name>GGHB_DICDI</name>
<evidence type="ECO:0000250" key="1"/>
<evidence type="ECO:0000255" key="2"/>
<evidence type="ECO:0000255" key="3">
    <source>
        <dbReference type="PROSITE-ProRule" id="PRU00607"/>
    </source>
</evidence>
<evidence type="ECO:0000305" key="4"/>